<feature type="chain" id="PRO_0000398622" description="Fanconi-associated nuclease 1 homolog">
    <location>
        <begin position="1"/>
        <end position="865"/>
    </location>
</feature>
<feature type="domain" description="VRR-NUC">
    <location>
        <begin position="744"/>
        <end position="857"/>
    </location>
</feature>
<feature type="zinc finger region" description="UBZ4-type" evidence="3">
    <location>
        <begin position="35"/>
        <end position="62"/>
    </location>
</feature>
<feature type="region of interest" description="Disordered" evidence="4">
    <location>
        <begin position="90"/>
        <end position="140"/>
    </location>
</feature>
<feature type="region of interest" description="Disordered" evidence="4">
    <location>
        <begin position="162"/>
        <end position="187"/>
    </location>
</feature>
<feature type="compositionally biased region" description="Basic and acidic residues" evidence="4">
    <location>
        <begin position="93"/>
        <end position="112"/>
    </location>
</feature>
<feature type="compositionally biased region" description="Basic and acidic residues" evidence="4">
    <location>
        <begin position="174"/>
        <end position="187"/>
    </location>
</feature>
<feature type="binding site" evidence="3">
    <location>
        <position position="38"/>
    </location>
    <ligand>
        <name>Zn(2+)</name>
        <dbReference type="ChEBI" id="CHEBI:29105"/>
    </ligand>
</feature>
<feature type="binding site" evidence="3">
    <location>
        <position position="41"/>
    </location>
    <ligand>
        <name>Zn(2+)</name>
        <dbReference type="ChEBI" id="CHEBI:29105"/>
    </ligand>
</feature>
<feature type="binding site" evidence="3">
    <location>
        <position position="53"/>
    </location>
    <ligand>
        <name>Zn(2+)</name>
        <dbReference type="ChEBI" id="CHEBI:29105"/>
    </ligand>
</feature>
<feature type="binding site" evidence="3">
    <location>
        <position position="57"/>
    </location>
    <ligand>
        <name>Zn(2+)</name>
        <dbReference type="ChEBI" id="CHEBI:29105"/>
    </ligand>
</feature>
<feature type="binding site" evidence="1">
    <location>
        <position position="682"/>
    </location>
    <ligand>
        <name>Mn(2+)</name>
        <dbReference type="ChEBI" id="CHEBI:29035"/>
        <label>2</label>
    </ligand>
</feature>
<feature type="binding site" evidence="1">
    <location>
        <position position="810"/>
    </location>
    <ligand>
        <name>Mn(2+)</name>
        <dbReference type="ChEBI" id="CHEBI:29035"/>
        <label>1</label>
    </ligand>
</feature>
<feature type="binding site" evidence="1">
    <location>
        <position position="810"/>
    </location>
    <ligand>
        <name>Mn(2+)</name>
        <dbReference type="ChEBI" id="CHEBI:29035"/>
        <label>2</label>
    </ligand>
</feature>
<feature type="binding site" evidence="1">
    <location>
        <position position="825"/>
    </location>
    <ligand>
        <name>Mn(2+)</name>
        <dbReference type="ChEBI" id="CHEBI:29035"/>
        <label>1</label>
    </ligand>
</feature>
<feature type="binding site" evidence="1">
    <location>
        <position position="826"/>
    </location>
    <ligand>
        <name>Mn(2+)</name>
        <dbReference type="ChEBI" id="CHEBI:29035"/>
        <label>1</label>
    </ligand>
</feature>
<name>FAN1_CAEEL</name>
<comment type="function">
    <text evidence="2 5 6 7">Nuclease required for the repair of DNA interstrand cross-links (ICL). Acts as a 5'-3' exonuclease that anchors at a cut end of DNA and cleaves DNA successively at every third nucleotide, allowing to excise an ICL from one strand through flanking incisions.</text>
</comment>
<comment type="catalytic activity">
    <reaction evidence="2">
        <text>Hydrolytically removes 5'-nucleotides successively from the 3'-hydroxy termini of 3'-hydroxy-terminated oligonucleotides.</text>
        <dbReference type="EC" id="3.1.4.1"/>
    </reaction>
</comment>
<comment type="cofactor">
    <cofactor evidence="1">
        <name>Mn(2+)</name>
        <dbReference type="ChEBI" id="CHEBI:29035"/>
    </cofactor>
    <cofactor evidence="1">
        <name>Mg(2+)</name>
        <dbReference type="ChEBI" id="CHEBI:18420"/>
    </cofactor>
    <text evidence="1">Binds 2 magnesium or manganese ions per subunit.</text>
</comment>
<comment type="interaction">
    <interactant intactId="EBI-313626">
        <id>P90740</id>
    </interactant>
    <interactant intactId="EBI-313647">
        <id>P55853</id>
        <label>smo-1</label>
    </interactant>
    <organismsDiffer>false</organismsDiffer>
    <experiments>3</experiments>
</comment>
<comment type="subcellular location">
    <subcellularLocation>
        <location evidence="2">Nucleus</location>
    </subcellularLocation>
</comment>
<comment type="disruption phenotype">
    <text evidence="5 6 7">No visible phenotype in normal conditions. Strong increase of embryonic lethality following cisplatin, nitrogen mustard or mitomycin-C (MMC) treatment.</text>
</comment>
<comment type="similarity">
    <text evidence="8">Belongs to the FAN1 family.</text>
</comment>
<gene>
    <name type="primary">fan-1</name>
    <name type="ORF">C01G5.8</name>
</gene>
<evidence type="ECO:0000250" key="1">
    <source>
        <dbReference type="UniProtKB" id="Q9I2N0"/>
    </source>
</evidence>
<evidence type="ECO:0000250" key="2">
    <source>
        <dbReference type="UniProtKB" id="Q9Y2M0"/>
    </source>
</evidence>
<evidence type="ECO:0000255" key="3">
    <source>
        <dbReference type="PROSITE-ProRule" id="PRU01256"/>
    </source>
</evidence>
<evidence type="ECO:0000256" key="4">
    <source>
        <dbReference type="SAM" id="MobiDB-lite"/>
    </source>
</evidence>
<evidence type="ECO:0000269" key="5">
    <source>
    </source>
</evidence>
<evidence type="ECO:0000269" key="6">
    <source>
    </source>
</evidence>
<evidence type="ECO:0000269" key="7">
    <source>
    </source>
</evidence>
<evidence type="ECO:0000305" key="8"/>
<accession>P90740</accession>
<dbReference type="EC" id="3.1.4.1" evidence="2"/>
<dbReference type="EMBL" id="FO080264">
    <property type="protein sequence ID" value="CCD62449.1"/>
    <property type="molecule type" value="Genomic_DNA"/>
</dbReference>
<dbReference type="PIR" id="T30998">
    <property type="entry name" value="T30998"/>
</dbReference>
<dbReference type="RefSeq" id="NP_500997.1">
    <property type="nucleotide sequence ID" value="NM_068596.6"/>
</dbReference>
<dbReference type="SMR" id="P90740"/>
<dbReference type="BioGRID" id="42536">
    <property type="interactions" value="5"/>
</dbReference>
<dbReference type="DIP" id="DIP-24423N"/>
<dbReference type="FunCoup" id="P90740">
    <property type="interactions" value="2665"/>
</dbReference>
<dbReference type="IntAct" id="P90740">
    <property type="interactions" value="3"/>
</dbReference>
<dbReference type="STRING" id="6239.C01G5.8a.1"/>
<dbReference type="PaxDb" id="6239-C01G5.8"/>
<dbReference type="EnsemblMetazoa" id="C01G5.8a.1">
    <property type="protein sequence ID" value="C01G5.8a.1"/>
    <property type="gene ID" value="WBGene00015310"/>
</dbReference>
<dbReference type="GeneID" id="177415"/>
<dbReference type="KEGG" id="cel:CELE_C01G5.8"/>
<dbReference type="UCSC" id="C01G5.8">
    <property type="organism name" value="c. elegans"/>
</dbReference>
<dbReference type="AGR" id="WB:WBGene00015310"/>
<dbReference type="CTD" id="177415"/>
<dbReference type="WormBase" id="C01G5.8a">
    <property type="protein sequence ID" value="CE07800"/>
    <property type="gene ID" value="WBGene00015310"/>
    <property type="gene designation" value="fan-1"/>
</dbReference>
<dbReference type="eggNOG" id="KOG2143">
    <property type="taxonomic scope" value="Eukaryota"/>
</dbReference>
<dbReference type="HOGENOM" id="CLU_311526_0_0_1"/>
<dbReference type="InParanoid" id="P90740"/>
<dbReference type="OMA" id="ECRVESM"/>
<dbReference type="OrthoDB" id="76364at2759"/>
<dbReference type="PhylomeDB" id="P90740"/>
<dbReference type="SignaLink" id="P90740"/>
<dbReference type="PRO" id="PR:P90740"/>
<dbReference type="Proteomes" id="UP000001940">
    <property type="component" value="Chromosome IV"/>
</dbReference>
<dbReference type="Bgee" id="WBGene00015310">
    <property type="expression patterns" value="Expressed in adult organism and 4 other cell types or tissues"/>
</dbReference>
<dbReference type="ExpressionAtlas" id="P90740">
    <property type="expression patterns" value="baseline and differential"/>
</dbReference>
<dbReference type="GO" id="GO:0005634">
    <property type="term" value="C:nucleus"/>
    <property type="evidence" value="ECO:0000314"/>
    <property type="project" value="WormBase"/>
</dbReference>
<dbReference type="GO" id="GO:0008409">
    <property type="term" value="F:5'-3' exonuclease activity"/>
    <property type="evidence" value="ECO:0000318"/>
    <property type="project" value="GO_Central"/>
</dbReference>
<dbReference type="GO" id="GO:0017108">
    <property type="term" value="F:5'-flap endonuclease activity"/>
    <property type="evidence" value="ECO:0000318"/>
    <property type="project" value="GO_Central"/>
</dbReference>
<dbReference type="GO" id="GO:0070336">
    <property type="term" value="F:flap-structured DNA binding"/>
    <property type="evidence" value="ECO:0000318"/>
    <property type="project" value="GO_Central"/>
</dbReference>
<dbReference type="GO" id="GO:0004528">
    <property type="term" value="F:phosphodiesterase I activity"/>
    <property type="evidence" value="ECO:0007669"/>
    <property type="project" value="UniProtKB-EC"/>
</dbReference>
<dbReference type="GO" id="GO:0008270">
    <property type="term" value="F:zinc ion binding"/>
    <property type="evidence" value="ECO:0007669"/>
    <property type="project" value="UniProtKB-KW"/>
</dbReference>
<dbReference type="GO" id="GO:0006281">
    <property type="term" value="P:DNA repair"/>
    <property type="evidence" value="ECO:0000315"/>
    <property type="project" value="UniProtKB"/>
</dbReference>
<dbReference type="GO" id="GO:0036297">
    <property type="term" value="P:interstrand cross-link repair"/>
    <property type="evidence" value="ECO:0000318"/>
    <property type="project" value="GO_Central"/>
</dbReference>
<dbReference type="CDD" id="cd22326">
    <property type="entry name" value="FAN1-like"/>
    <property type="match status" value="1"/>
</dbReference>
<dbReference type="FunFam" id="3.40.1350.10:FF:000020">
    <property type="entry name" value="Fanconi-associated nuclease"/>
    <property type="match status" value="1"/>
</dbReference>
<dbReference type="Gene3D" id="3.40.1350.10">
    <property type="match status" value="1"/>
</dbReference>
<dbReference type="InterPro" id="IPR033315">
    <property type="entry name" value="Fan1-like"/>
</dbReference>
<dbReference type="InterPro" id="IPR049132">
    <property type="entry name" value="FAN1-like_euk"/>
</dbReference>
<dbReference type="InterPro" id="IPR049126">
    <property type="entry name" value="FAN1-like_TPR"/>
</dbReference>
<dbReference type="InterPro" id="IPR049125">
    <property type="entry name" value="FAN1-like_WH"/>
</dbReference>
<dbReference type="InterPro" id="IPR006642">
    <property type="entry name" value="Rad18_UBZ4"/>
</dbReference>
<dbReference type="InterPro" id="IPR011856">
    <property type="entry name" value="tRNA_endonuc-like_dom_sf"/>
</dbReference>
<dbReference type="InterPro" id="IPR014883">
    <property type="entry name" value="VRR_NUC"/>
</dbReference>
<dbReference type="PANTHER" id="PTHR15749">
    <property type="entry name" value="FANCONI-ASSOCIATED NUCLEASE 1"/>
    <property type="match status" value="1"/>
</dbReference>
<dbReference type="PANTHER" id="PTHR15749:SF4">
    <property type="entry name" value="FANCONI-ASSOCIATED NUCLEASE 1"/>
    <property type="match status" value="1"/>
</dbReference>
<dbReference type="Pfam" id="PF21315">
    <property type="entry name" value="FAN1_HTH"/>
    <property type="match status" value="1"/>
</dbReference>
<dbReference type="Pfam" id="PF21170">
    <property type="entry name" value="FAN1_TPR"/>
    <property type="match status" value="1"/>
</dbReference>
<dbReference type="Pfam" id="PF08774">
    <property type="entry name" value="VRR_NUC"/>
    <property type="match status" value="1"/>
</dbReference>
<dbReference type="SMART" id="SM00990">
    <property type="entry name" value="VRR_NUC"/>
    <property type="match status" value="1"/>
</dbReference>
<dbReference type="PROSITE" id="PS51908">
    <property type="entry name" value="ZF_UBZ4"/>
    <property type="match status" value="1"/>
</dbReference>
<keyword id="KW-0227">DNA damage</keyword>
<keyword id="KW-0234">DNA repair</keyword>
<keyword id="KW-0378">Hydrolase</keyword>
<keyword id="KW-0460">Magnesium</keyword>
<keyword id="KW-0464">Manganese</keyword>
<keyword id="KW-0479">Metal-binding</keyword>
<keyword id="KW-0540">Nuclease</keyword>
<keyword id="KW-0539">Nucleus</keyword>
<keyword id="KW-1185">Reference proteome</keyword>
<keyword id="KW-0862">Zinc</keyword>
<keyword id="KW-0863">Zinc-finger</keyword>
<protein>
    <recommendedName>
        <fullName evidence="8">Fanconi-associated nuclease 1 homolog</fullName>
        <ecNumber evidence="2">3.1.4.1</ecNumber>
    </recommendedName>
</protein>
<organism>
    <name type="scientific">Caenorhabditis elegans</name>
    <dbReference type="NCBI Taxonomy" id="6239"/>
    <lineage>
        <taxon>Eukaryota</taxon>
        <taxon>Metazoa</taxon>
        <taxon>Ecdysozoa</taxon>
        <taxon>Nematoda</taxon>
        <taxon>Chromadorea</taxon>
        <taxon>Rhabditida</taxon>
        <taxon>Rhabditina</taxon>
        <taxon>Rhabditomorpha</taxon>
        <taxon>Rhabditoidea</taxon>
        <taxon>Rhabditidae</taxon>
        <taxon>Peloderinae</taxon>
        <taxon>Caenorhabditis</taxon>
    </lineage>
</organism>
<sequence>MKKAKKEKKEKIIKPDGPINFNRSIMAAFEKQSRGKICPLCETKFSLASYKSHMNTCNVADDDEEIEVIATYTRDEAILMRAGPEIILGDASFSDKSENPTKRRKTDEREVPSEDDIVPEVPGPSGIVKNHEMPSESLDVTEISENIEKVIKKSPEWINHRRRSSRLLQNSQKDQADNANKEDPVKKETATISEVLQAIERFEQRVSGPEQTWPYYIKITIKIMKRVISTEKFDGTFYADDFWLPSDIITFYRFVELLSEGAKCLLVRLFIRKPAWYNLEKLEQKYPEIPNIKEAVSELAKGHFIDDDSSMKTLDEALQISDVVALKNVTKKFKLDGTKNRQELIQSLRKFAQSQQSIFGGTGNVEKSILKSLKQELGPCVRVRGGFVDLFKCLFTIYCPVTTNSANVIDNPSTTNVYQDLLYLMLSVANGTVQFPAPNPCPIIASFYKNRNMLQDYMISKSLEIAIVSQMSNGNLDAALDLAIDAKEFIEQMSDDDKRYYESLEIHERKFTSIWVFTRCCGHASSILERQKKYGMAVEWQKDLLITNKDIQSYCIDSRGIWWDRMLLNLDSHLKEKKECAKMIQIALQDPSILEKELLMIQDRALKLKEMPADFVTPINIGNPEKKTITANVITKSLGDGRINRFMIRDHETDDDVECSVEEVTRRHYLENEGFSTGVHDEGSTWHTLFGLFFYDVIFATDESVESTWLSELQDCPSDLSNTLYSKRKEKFEDRFVWLEEAEQELIEENIRKIWDLKHNETNRECSWKQFPMGAEDCVSFFQCIPRPALILILRRLAENYRNSRSGFPDLTLWNPETKRVAVVEVKGPGDRLSTKQRLWLAIFADSGIRAEVCHVAAQNSRLLV</sequence>
<reference key="1">
    <citation type="journal article" date="1998" name="Science">
        <title>Genome sequence of the nematode C. elegans: a platform for investigating biology.</title>
        <authorList>
            <consortium name="The C. elegans sequencing consortium"/>
        </authorList>
    </citation>
    <scope>NUCLEOTIDE SEQUENCE [LARGE SCALE GENOMIC DNA]</scope>
    <source>
        <strain>Bristol N2</strain>
    </source>
</reference>
<reference key="2">
    <citation type="journal article" date="2010" name="Cell">
        <title>Identification of KIAA1018/FAN1, a DNA repair nuclease recruited to DNA damage by monoubiquitinated FANCD2.</title>
        <authorList>
            <person name="MacKay C."/>
            <person name="Declais A.C."/>
            <person name="Lundin C."/>
            <person name="Agostinho A."/>
            <person name="Deans A.J."/>
            <person name="MacArtney T.J."/>
            <person name="Hofmann K."/>
            <person name="Gartner A."/>
            <person name="West S.C."/>
            <person name="Helleday T."/>
            <person name="Lilley D.M."/>
            <person name="Rouse J."/>
        </authorList>
    </citation>
    <scope>FUNCTION</scope>
    <scope>DISRUPTION PHENOTYPE</scope>
</reference>
<reference key="3">
    <citation type="journal article" date="2010" name="Cell">
        <title>Deficiency of FANCD2-associated nuclease KIAA1018/FAN1 sensitizes cells to interstrand crosslinking agents.</title>
        <authorList>
            <person name="Kratz K."/>
            <person name="Schopf B."/>
            <person name="Kaden S."/>
            <person name="Sendoel A."/>
            <person name="Eberhard R."/>
            <person name="Lademann C."/>
            <person name="Cannavo E."/>
            <person name="Sartori A.A."/>
            <person name="Hengartner M.O."/>
            <person name="Jiricny J."/>
        </authorList>
    </citation>
    <scope>FUNCTION</scope>
    <scope>DISRUPTION PHENOTYPE</scope>
</reference>
<reference key="4">
    <citation type="journal article" date="2010" name="Mol. Cell">
        <title>A genetic screen identifies FAN1, a Fanconi anemia-associated nuclease necessary for DNA interstrand crosslink repair.</title>
        <authorList>
            <person name="Smogorzewska A."/>
            <person name="Desetty R."/>
            <person name="Saito T.T."/>
            <person name="Schlabach M."/>
            <person name="Lach F.P."/>
            <person name="Sowa M.E."/>
            <person name="Clark A.B."/>
            <person name="Kunkel T.A."/>
            <person name="Harper J.W."/>
            <person name="Colaiacovo M.P."/>
            <person name="Elledge S.J."/>
        </authorList>
    </citation>
    <scope>FUNCTION</scope>
    <scope>DISRUPTION PHENOTYPE</scope>
</reference>
<proteinExistence type="evidence at protein level"/>